<accession>Q8RGR0</accession>
<name>PDXA2_FUSNN</name>
<keyword id="KW-0119">Carbohydrate metabolism</keyword>
<keyword id="KW-0479">Metal-binding</keyword>
<keyword id="KW-0520">NAD</keyword>
<keyword id="KW-0560">Oxidoreductase</keyword>
<keyword id="KW-1185">Reference proteome</keyword>
<gene>
    <name type="ordered locus">FN0226</name>
</gene>
<organism>
    <name type="scientific">Fusobacterium nucleatum subsp. nucleatum (strain ATCC 25586 / DSM 15643 / BCRC 10681 / CIP 101130 / JCM 8532 / KCTC 2640 / LMG 13131 / VPI 4355)</name>
    <dbReference type="NCBI Taxonomy" id="190304"/>
    <lineage>
        <taxon>Bacteria</taxon>
        <taxon>Fusobacteriati</taxon>
        <taxon>Fusobacteriota</taxon>
        <taxon>Fusobacteriia</taxon>
        <taxon>Fusobacteriales</taxon>
        <taxon>Fusobacteriaceae</taxon>
        <taxon>Fusobacterium</taxon>
    </lineage>
</organism>
<sequence>MRTKIAIPMGDPAGVGPEIVVKTAVSKEILDLCDLVVIGDKKVLEKATKICQVDLKIHTIKNIEEGKYEKGILNVIDLENVDMNTLEYGQVQGMCGKAAFEYIKKCVELAMEYKVDAIATTPINKESLRAGNVNYIGHTEILGDLSNSRDPLTMFEVDNMRVFFLTRHMSLRKACDAITKERVLEYIERCTKALKQLGVTGKMAVAGLNPHSGEHGLFGNEEVKEITPAIEEAQKLGYDVVGPIGADSVFHQALQGRYVAVLSLYHDQGHIATKTYDFERTIAITLDMPFLRTSVDHGTAFDIAGKGIVSAISMIEAVKLAAKYAPNFKNIK</sequence>
<evidence type="ECO:0000250" key="1">
    <source>
        <dbReference type="UniProtKB" id="P19624"/>
    </source>
</evidence>
<evidence type="ECO:0000250" key="2">
    <source>
        <dbReference type="UniProtKB" id="P58718"/>
    </source>
</evidence>
<evidence type="ECO:0000305" key="3"/>
<dbReference type="EC" id="1.1.1.408" evidence="2"/>
<dbReference type="EMBL" id="AE009951">
    <property type="protein sequence ID" value="AAL94432.1"/>
    <property type="molecule type" value="Genomic_DNA"/>
</dbReference>
<dbReference type="RefSeq" id="NP_603133.1">
    <property type="nucleotide sequence ID" value="NC_003454.1"/>
</dbReference>
<dbReference type="RefSeq" id="WP_011016238.1">
    <property type="nucleotide sequence ID" value="NZ_CP028101.1"/>
</dbReference>
<dbReference type="SMR" id="Q8RGR0"/>
<dbReference type="STRING" id="190304.FN0226"/>
<dbReference type="PaxDb" id="190304-FN0226"/>
<dbReference type="EnsemblBacteria" id="AAL94432">
    <property type="protein sequence ID" value="AAL94432"/>
    <property type="gene ID" value="FN0226"/>
</dbReference>
<dbReference type="GeneID" id="79783244"/>
<dbReference type="KEGG" id="fnu:FN0226"/>
<dbReference type="PATRIC" id="fig|190304.8.peg.807"/>
<dbReference type="eggNOG" id="COG1995">
    <property type="taxonomic scope" value="Bacteria"/>
</dbReference>
<dbReference type="HOGENOM" id="CLU_040168_0_1_0"/>
<dbReference type="InParanoid" id="Q8RGR0"/>
<dbReference type="BioCyc" id="FNUC190304:G1FZS-828-MONOMER"/>
<dbReference type="Proteomes" id="UP000002521">
    <property type="component" value="Chromosome"/>
</dbReference>
<dbReference type="GO" id="GO:0046872">
    <property type="term" value="F:metal ion binding"/>
    <property type="evidence" value="ECO:0007669"/>
    <property type="project" value="UniProtKB-KW"/>
</dbReference>
<dbReference type="GO" id="GO:0051287">
    <property type="term" value="F:NAD binding"/>
    <property type="evidence" value="ECO:0007669"/>
    <property type="project" value="InterPro"/>
</dbReference>
<dbReference type="GO" id="GO:0016491">
    <property type="term" value="F:oxidoreductase activity"/>
    <property type="evidence" value="ECO:0007669"/>
    <property type="project" value="UniProtKB-KW"/>
</dbReference>
<dbReference type="Gene3D" id="3.40.718.10">
    <property type="entry name" value="Isopropylmalate Dehydrogenase"/>
    <property type="match status" value="1"/>
</dbReference>
<dbReference type="InterPro" id="IPR005255">
    <property type="entry name" value="PdxA_fam"/>
</dbReference>
<dbReference type="NCBIfam" id="TIGR00557">
    <property type="entry name" value="pdxA"/>
    <property type="match status" value="1"/>
</dbReference>
<dbReference type="NCBIfam" id="NF002992">
    <property type="entry name" value="PRK03743.1"/>
    <property type="match status" value="1"/>
</dbReference>
<dbReference type="PANTHER" id="PTHR30004">
    <property type="entry name" value="4-HYDROXYTHREONINE-4-PHOSPHATE DEHYDROGENASE"/>
    <property type="match status" value="1"/>
</dbReference>
<dbReference type="PANTHER" id="PTHR30004:SF6">
    <property type="entry name" value="D-THREONATE 4-PHOSPHATE DEHYDROGENASE"/>
    <property type="match status" value="1"/>
</dbReference>
<dbReference type="Pfam" id="PF04166">
    <property type="entry name" value="PdxA"/>
    <property type="match status" value="1"/>
</dbReference>
<dbReference type="SUPFAM" id="SSF53659">
    <property type="entry name" value="Isocitrate/Isopropylmalate dehydrogenase-like"/>
    <property type="match status" value="1"/>
</dbReference>
<reference key="1">
    <citation type="journal article" date="2002" name="J. Bacteriol.">
        <title>Genome sequence and analysis of the oral bacterium Fusobacterium nucleatum strain ATCC 25586.</title>
        <authorList>
            <person name="Kapatral V."/>
            <person name="Anderson I."/>
            <person name="Ivanova N."/>
            <person name="Reznik G."/>
            <person name="Los T."/>
            <person name="Lykidis A."/>
            <person name="Bhattacharyya A."/>
            <person name="Bartman A."/>
            <person name="Gardner W."/>
            <person name="Grechkin G."/>
            <person name="Zhu L."/>
            <person name="Vasieva O."/>
            <person name="Chu L."/>
            <person name="Kogan Y."/>
            <person name="Chaga O."/>
            <person name="Goltsman E."/>
            <person name="Bernal A."/>
            <person name="Larsen N."/>
            <person name="D'Souza M."/>
            <person name="Walunas T."/>
            <person name="Pusch G."/>
            <person name="Haselkorn R."/>
            <person name="Fonstein M."/>
            <person name="Kyrpides N.C."/>
            <person name="Overbeek R."/>
        </authorList>
    </citation>
    <scope>NUCLEOTIDE SEQUENCE [LARGE SCALE GENOMIC DNA]</scope>
    <source>
        <strain>ATCC 25586 / DSM 15643 / BCRC 10681 / CIP 101130 / JCM 8532 / KCTC 2640 / LMG 13131 / VPI 4355</strain>
    </source>
</reference>
<comment type="function">
    <text evidence="2">Catalyzes the NAD-dependent oxidation and subsequent decarboxylation of D-threonate 4-phosphate to produce dihydroxyacetone phosphate (DHAP).</text>
</comment>
<comment type="catalytic activity">
    <reaction evidence="2">
        <text>4-O-phospho-D-threonate + NAD(+) = dihydroxyacetone phosphate + CO2 + NADH</text>
        <dbReference type="Rhea" id="RHEA:52396"/>
        <dbReference type="ChEBI" id="CHEBI:16526"/>
        <dbReference type="ChEBI" id="CHEBI:57540"/>
        <dbReference type="ChEBI" id="CHEBI:57642"/>
        <dbReference type="ChEBI" id="CHEBI:57945"/>
        <dbReference type="ChEBI" id="CHEBI:136590"/>
        <dbReference type="EC" id="1.1.1.408"/>
    </reaction>
</comment>
<comment type="cofactor">
    <cofactor evidence="1">
        <name>a divalent metal cation</name>
        <dbReference type="ChEBI" id="CHEBI:60240"/>
    </cofactor>
    <text evidence="1">Binds 1 divalent metal cation per subunit.</text>
</comment>
<comment type="subunit">
    <text evidence="2">Homodimer.</text>
</comment>
<comment type="similarity">
    <text evidence="3">Belongs to the PdxA family. PdxA2 subfamily.</text>
</comment>
<proteinExistence type="inferred from homology"/>
<feature type="chain" id="PRO_0000188808" description="Putative D-threonate 4-phosphate dehydrogenase">
    <location>
        <begin position="1"/>
        <end position="332"/>
    </location>
</feature>
<feature type="binding site" evidence="1">
    <location>
        <position position="138"/>
    </location>
    <ligand>
        <name>substrate</name>
    </ligand>
</feature>
<feature type="binding site" evidence="1">
    <location>
        <position position="139"/>
    </location>
    <ligand>
        <name>substrate</name>
    </ligand>
</feature>
<feature type="binding site" evidence="1">
    <location>
        <position position="168"/>
    </location>
    <ligand>
        <name>a divalent metal cation</name>
        <dbReference type="ChEBI" id="CHEBI:60240"/>
        <note>ligand shared between dimeric partners</note>
    </ligand>
</feature>
<feature type="binding site" evidence="1">
    <location>
        <position position="211"/>
    </location>
    <ligand>
        <name>a divalent metal cation</name>
        <dbReference type="ChEBI" id="CHEBI:60240"/>
        <note>ligand shared between dimeric partners</note>
    </ligand>
</feature>
<feature type="binding site" evidence="1">
    <location>
        <position position="266"/>
    </location>
    <ligand>
        <name>a divalent metal cation</name>
        <dbReference type="ChEBI" id="CHEBI:60240"/>
        <note>ligand shared between dimeric partners</note>
    </ligand>
</feature>
<feature type="binding site" evidence="1">
    <location>
        <position position="274"/>
    </location>
    <ligand>
        <name>substrate</name>
    </ligand>
</feature>
<feature type="binding site" evidence="1">
    <location>
        <position position="292"/>
    </location>
    <ligand>
        <name>substrate</name>
    </ligand>
</feature>
<protein>
    <recommendedName>
        <fullName evidence="2">Putative D-threonate 4-phosphate dehydrogenase</fullName>
        <ecNumber evidence="2">1.1.1.408</ecNumber>
    </recommendedName>
</protein>